<comment type="function">
    <text evidence="1">Recognizes and binds the 7-methylguanosine-containing mRNA cap during an early step in the initiation of protein synthesis and facilitates ribosome binding by inducing the unwinding of the mRNAs secondary structures.</text>
</comment>
<comment type="subunit">
    <text evidence="1">EIF4F is a multi-subunit complex, the composition of which varies with external and internal environmental conditions. It is composed of at least EIF4A, EIF4E and EIF4G (By similarity).</text>
</comment>
<comment type="alternative products">
    <event type="alternative splicing"/>
    <isoform>
        <id>Q3UTA9-1</id>
        <name>1</name>
        <sequence type="displayed"/>
    </isoform>
    <isoform>
        <id>Q3UTA9-2</id>
        <name>2</name>
        <sequence type="described" ref="VSP_034476 VSP_034477"/>
    </isoform>
    <text>Additional isoforms seem to exist.</text>
</comment>
<comment type="similarity">
    <text evidence="4">Belongs to the eukaryotic initiation factor 4E family.</text>
</comment>
<evidence type="ECO:0000250" key="1"/>
<evidence type="ECO:0000256" key="2">
    <source>
        <dbReference type="SAM" id="MobiDB-lite"/>
    </source>
</evidence>
<evidence type="ECO:0000303" key="3">
    <source>
    </source>
</evidence>
<evidence type="ECO:0000305" key="4"/>
<sequence>MNKVEGGGHKEEVVVKEKEVVKEKPSEATAEGVQAGEAKDLPGSLKTQRRKAHREHPPEVLSKLHPLQYRWVLWFFKNDRSRAWQDNLQLVTKFNTVEDFWAVYSHIKLASKLSSGCDYALFKEGILPMWEDNRNKQGGRWLLSIDKQLRHFELDRLWLETLLCLVGNCFEEYSREVCGAVVNIRTKRDKIALWTSEAEDKAGVMQIGQIYKERLGISTKTIIGYQAHADTAAKSNNLANKFVV</sequence>
<protein>
    <recommendedName>
        <fullName>Eukaryotic translation initiation factor 4E type 1B</fullName>
    </recommendedName>
    <alternativeName>
        <fullName>Oocyte-specific eukaryotic translation initiation factor 4E-like</fullName>
    </alternativeName>
</protein>
<proteinExistence type="evidence at transcript level"/>
<name>I4E1B_MOUSE</name>
<dbReference type="EMBL" id="DQ279473">
    <property type="protein sequence ID" value="ABB88894.1"/>
    <property type="molecule type" value="mRNA"/>
</dbReference>
<dbReference type="EMBL" id="DQ279474">
    <property type="protein sequence ID" value="ABB88895.1"/>
    <property type="molecule type" value="mRNA"/>
</dbReference>
<dbReference type="EMBL" id="AK139577">
    <property type="protein sequence ID" value="BAE24071.1"/>
    <property type="molecule type" value="mRNA"/>
</dbReference>
<dbReference type="EMBL" id="BC139143">
    <property type="protein sequence ID" value="AAI39144.1"/>
    <property type="molecule type" value="mRNA"/>
</dbReference>
<dbReference type="EMBL" id="BC139144">
    <property type="protein sequence ID" value="AAI39145.1"/>
    <property type="molecule type" value="mRNA"/>
</dbReference>
<dbReference type="CCDS" id="CCDS49269.1">
    <molecule id="Q3UTA9-1"/>
</dbReference>
<dbReference type="CCDS" id="CCDS49270.1">
    <molecule id="Q3UTA9-2"/>
</dbReference>
<dbReference type="RefSeq" id="NP_001028441.1">
    <molecule id="Q3UTA9-1"/>
    <property type="nucleotide sequence ID" value="NM_001033269.3"/>
</dbReference>
<dbReference type="RefSeq" id="NP_001034772.1">
    <molecule id="Q3UTA9-2"/>
    <property type="nucleotide sequence ID" value="NM_001039683.2"/>
</dbReference>
<dbReference type="RefSeq" id="NP_001273107.1">
    <property type="nucleotide sequence ID" value="NM_001286178.1"/>
</dbReference>
<dbReference type="RefSeq" id="NP_001273108.1">
    <property type="nucleotide sequence ID" value="NM_001286179.1"/>
</dbReference>
<dbReference type="RefSeq" id="NP_001273109.1">
    <property type="nucleotide sequence ID" value="NM_001286180.1"/>
</dbReference>
<dbReference type="RefSeq" id="XP_017170974.1">
    <molecule id="Q3UTA9-1"/>
    <property type="nucleotide sequence ID" value="XM_017315485.2"/>
</dbReference>
<dbReference type="RefSeq" id="XP_017170975.1">
    <molecule id="Q3UTA9-2"/>
    <property type="nucleotide sequence ID" value="XM_017315486.2"/>
</dbReference>
<dbReference type="SMR" id="Q3UTA9"/>
<dbReference type="FunCoup" id="Q3UTA9">
    <property type="interactions" value="688"/>
</dbReference>
<dbReference type="STRING" id="10090.ENSMUSP00000118697"/>
<dbReference type="PhosphoSitePlus" id="Q3UTA9"/>
<dbReference type="PaxDb" id="10090-ENSMUSP00000123294"/>
<dbReference type="Antibodypedia" id="63751">
    <property type="antibodies" value="28 antibodies from 9 providers"/>
</dbReference>
<dbReference type="Ensembl" id="ENSMUST00000110003.9">
    <molecule id="Q3UTA9-1"/>
    <property type="protein sequence ID" value="ENSMUSP00000105630.3"/>
    <property type="gene ID" value="ENSMUSG00000074895.11"/>
</dbReference>
<dbReference type="Ensembl" id="ENSMUST00000132728.8">
    <molecule id="Q3UTA9-1"/>
    <property type="protein sequence ID" value="ENSMUSP00000123294.2"/>
    <property type="gene ID" value="ENSMUSG00000074895.11"/>
</dbReference>
<dbReference type="Ensembl" id="ENSMUST00000152204.3">
    <molecule id="Q3UTA9-2"/>
    <property type="protein sequence ID" value="ENSMUSP00000120619.2"/>
    <property type="gene ID" value="ENSMUSG00000074895.11"/>
</dbReference>
<dbReference type="GeneID" id="218268"/>
<dbReference type="KEGG" id="mmu:218268"/>
<dbReference type="UCSC" id="uc007qpg.2">
    <molecule id="Q3UTA9-2"/>
    <property type="organism name" value="mouse"/>
</dbReference>
<dbReference type="UCSC" id="uc007qph.2">
    <molecule id="Q3UTA9-1"/>
    <property type="organism name" value="mouse"/>
</dbReference>
<dbReference type="AGR" id="MGI:2685119"/>
<dbReference type="CTD" id="253314"/>
<dbReference type="MGI" id="MGI:2685119">
    <property type="gene designation" value="Eif4e1b"/>
</dbReference>
<dbReference type="VEuPathDB" id="HostDB:ENSMUSG00000074895"/>
<dbReference type="eggNOG" id="KOG1670">
    <property type="taxonomic scope" value="Eukaryota"/>
</dbReference>
<dbReference type="GeneTree" id="ENSGT00940000160838"/>
<dbReference type="HOGENOM" id="CLU_043552_1_1_1"/>
<dbReference type="InParanoid" id="Q3UTA9"/>
<dbReference type="OrthoDB" id="590761at2759"/>
<dbReference type="PhylomeDB" id="Q3UTA9"/>
<dbReference type="TreeFam" id="TF101526"/>
<dbReference type="BioGRID-ORCS" id="218268">
    <property type="hits" value="3 hits in 77 CRISPR screens"/>
</dbReference>
<dbReference type="ChiTaRS" id="Eif4e1b">
    <property type="organism name" value="mouse"/>
</dbReference>
<dbReference type="PRO" id="PR:Q3UTA9"/>
<dbReference type="Proteomes" id="UP000000589">
    <property type="component" value="Chromosome 13"/>
</dbReference>
<dbReference type="RNAct" id="Q3UTA9">
    <property type="molecule type" value="protein"/>
</dbReference>
<dbReference type="Bgee" id="ENSMUSG00000074895">
    <property type="expression patterns" value="Expressed in secondary oocyte and 16 other cell types or tissues"/>
</dbReference>
<dbReference type="ExpressionAtlas" id="Q3UTA9">
    <property type="expression patterns" value="baseline and differential"/>
</dbReference>
<dbReference type="GO" id="GO:0005737">
    <property type="term" value="C:cytoplasm"/>
    <property type="evidence" value="ECO:0007669"/>
    <property type="project" value="InterPro"/>
</dbReference>
<dbReference type="GO" id="GO:0003723">
    <property type="term" value="F:RNA binding"/>
    <property type="evidence" value="ECO:0007669"/>
    <property type="project" value="UniProtKB-KW"/>
</dbReference>
<dbReference type="GO" id="GO:0003743">
    <property type="term" value="F:translation initiation factor activity"/>
    <property type="evidence" value="ECO:0007669"/>
    <property type="project" value="UniProtKB-KW"/>
</dbReference>
<dbReference type="FunFam" id="3.30.760.10:FF:000051">
    <property type="entry name" value="Eukaryotic translation initiation factor 4E type 1B"/>
    <property type="match status" value="1"/>
</dbReference>
<dbReference type="Gene3D" id="3.30.760.10">
    <property type="entry name" value="RNA Cap, Translation Initiation Factor Eif4e"/>
    <property type="match status" value="1"/>
</dbReference>
<dbReference type="InterPro" id="IPR023398">
    <property type="entry name" value="TIF_eIF4e-like"/>
</dbReference>
<dbReference type="InterPro" id="IPR001040">
    <property type="entry name" value="TIF_eIF_4E"/>
</dbReference>
<dbReference type="InterPro" id="IPR019770">
    <property type="entry name" value="TIF_eIF_4E_CS"/>
</dbReference>
<dbReference type="PANTHER" id="PTHR11960">
    <property type="entry name" value="EUKARYOTIC TRANSLATION INITIATION FACTOR 4E RELATED"/>
    <property type="match status" value="1"/>
</dbReference>
<dbReference type="PANTHER" id="PTHR11960:SF3">
    <property type="entry name" value="EUKARYOTIC TRANSLATION INITIATION FACTOR 4E TYPE 1B"/>
    <property type="match status" value="1"/>
</dbReference>
<dbReference type="Pfam" id="PF01652">
    <property type="entry name" value="IF4E"/>
    <property type="match status" value="1"/>
</dbReference>
<dbReference type="SUPFAM" id="SSF55418">
    <property type="entry name" value="eIF4e-like"/>
    <property type="match status" value="1"/>
</dbReference>
<dbReference type="PROSITE" id="PS00813">
    <property type="entry name" value="IF4E"/>
    <property type="match status" value="1"/>
</dbReference>
<accession>Q3UTA9</accession>
<accession>Q27ZJ1</accession>
<feature type="chain" id="PRO_0000342514" description="Eukaryotic translation initiation factor 4E type 1B">
    <location>
        <begin position="1"/>
        <end position="244"/>
    </location>
</feature>
<feature type="region of interest" description="Disordered" evidence="2">
    <location>
        <begin position="1"/>
        <end position="57"/>
    </location>
</feature>
<feature type="region of interest" description="EIF4EBP1/2/3 binding" evidence="1">
    <location>
        <begin position="65"/>
        <end position="68"/>
    </location>
</feature>
<feature type="region of interest" description="EIF4EBP1/2/3 binding" evidence="1">
    <location>
        <begin position="101"/>
        <end position="105"/>
    </location>
</feature>
<feature type="region of interest" description="EIF4EBP1/2/3 binding" evidence="1">
    <location>
        <begin position="160"/>
        <end position="167"/>
    </location>
</feature>
<feature type="compositionally biased region" description="Basic and acidic residues" evidence="2">
    <location>
        <begin position="1"/>
        <end position="26"/>
    </location>
</feature>
<feature type="binding site" evidence="1">
    <location>
        <begin position="84"/>
        <end position="85"/>
    </location>
    <ligand>
        <name>mRNA</name>
        <dbReference type="ChEBI" id="CHEBI:33699"/>
    </ligand>
    <ligandPart>
        <name>N(7)-methylguanosine 5'-triphosphate group</name>
        <dbReference type="ChEBI" id="CHEBI:74429"/>
        <note>m7GTP residue in mRNA cap</note>
    </ligandPart>
</feature>
<feature type="binding site" evidence="1">
    <location>
        <begin position="130"/>
        <end position="131"/>
    </location>
    <ligand>
        <name>mRNA</name>
        <dbReference type="ChEBI" id="CHEBI:33699"/>
    </ligand>
    <ligandPart>
        <name>N(7)-methylguanosine 5'-triphosphate group</name>
        <dbReference type="ChEBI" id="CHEBI:74429"/>
        <note>m7GTP residue in mRNA cap</note>
    </ligandPart>
</feature>
<feature type="binding site" evidence="1">
    <location>
        <begin position="185"/>
        <end position="190"/>
    </location>
    <ligand>
        <name>mRNA</name>
        <dbReference type="ChEBI" id="CHEBI:33699"/>
    </ligand>
    <ligandPart>
        <name>N(7)-methylguanosine 5'-triphosphate group</name>
        <dbReference type="ChEBI" id="CHEBI:74429"/>
        <note>m7GTP residue in mRNA cap</note>
    </ligandPart>
</feature>
<feature type="binding site" evidence="1">
    <location>
        <begin position="233"/>
        <end position="235"/>
    </location>
    <ligand>
        <name>mRNA</name>
        <dbReference type="ChEBI" id="CHEBI:33699"/>
    </ligand>
    <ligandPart>
        <name>N(7)-methylguanosine 5'-triphosphate group</name>
        <dbReference type="ChEBI" id="CHEBI:74429"/>
        <note>m7GTP residue in mRNA cap</note>
    </ligandPart>
</feature>
<feature type="splice variant" id="VSP_034476" description="In isoform 2." evidence="3">
    <original>LLCLVGNCFEEYSREVCGAVVN</original>
    <variation>QGSVRCCREHPHEEGQDCPVDE</variation>
    <location>
        <begin position="162"/>
        <end position="183"/>
    </location>
</feature>
<feature type="splice variant" id="VSP_034477" description="In isoform 2." evidence="3">
    <location>
        <begin position="184"/>
        <end position="244"/>
    </location>
</feature>
<gene>
    <name type="primary">Eif4e1b</name>
    <name type="synonym">Gm273</name>
</gene>
<reference key="1">
    <citation type="journal article" date="2006" name="Genes Dev.">
        <title>Cracking the egg: molecular dynamics and evolutionary aspects of the transition from the fully grown oocyte to embryo.</title>
        <authorList>
            <person name="Evsikov A.V."/>
            <person name="Graber J.H."/>
            <person name="Brockman J.M."/>
            <person name="Hampl A."/>
            <person name="Holbrook A.E."/>
            <person name="Singh P."/>
            <person name="Eppig J.J."/>
            <person name="Solter D."/>
            <person name="Knowles B.B."/>
        </authorList>
    </citation>
    <scope>NUCLEOTIDE SEQUENCE [MRNA] (ISOFORMS 1 AND 2)</scope>
    <source>
        <strain>C57BL/6J</strain>
    </source>
</reference>
<reference key="2">
    <citation type="journal article" date="2005" name="Science">
        <title>The transcriptional landscape of the mammalian genome.</title>
        <authorList>
            <person name="Carninci P."/>
            <person name="Kasukawa T."/>
            <person name="Katayama S."/>
            <person name="Gough J."/>
            <person name="Frith M.C."/>
            <person name="Maeda N."/>
            <person name="Oyama R."/>
            <person name="Ravasi T."/>
            <person name="Lenhard B."/>
            <person name="Wells C."/>
            <person name="Kodzius R."/>
            <person name="Shimokawa K."/>
            <person name="Bajic V.B."/>
            <person name="Brenner S.E."/>
            <person name="Batalov S."/>
            <person name="Forrest A.R."/>
            <person name="Zavolan M."/>
            <person name="Davis M.J."/>
            <person name="Wilming L.G."/>
            <person name="Aidinis V."/>
            <person name="Allen J.E."/>
            <person name="Ambesi-Impiombato A."/>
            <person name="Apweiler R."/>
            <person name="Aturaliya R.N."/>
            <person name="Bailey T.L."/>
            <person name="Bansal M."/>
            <person name="Baxter L."/>
            <person name="Beisel K.W."/>
            <person name="Bersano T."/>
            <person name="Bono H."/>
            <person name="Chalk A.M."/>
            <person name="Chiu K.P."/>
            <person name="Choudhary V."/>
            <person name="Christoffels A."/>
            <person name="Clutterbuck D.R."/>
            <person name="Crowe M.L."/>
            <person name="Dalla E."/>
            <person name="Dalrymple B.P."/>
            <person name="de Bono B."/>
            <person name="Della Gatta G."/>
            <person name="di Bernardo D."/>
            <person name="Down T."/>
            <person name="Engstrom P."/>
            <person name="Fagiolini M."/>
            <person name="Faulkner G."/>
            <person name="Fletcher C.F."/>
            <person name="Fukushima T."/>
            <person name="Furuno M."/>
            <person name="Futaki S."/>
            <person name="Gariboldi M."/>
            <person name="Georgii-Hemming P."/>
            <person name="Gingeras T.R."/>
            <person name="Gojobori T."/>
            <person name="Green R.E."/>
            <person name="Gustincich S."/>
            <person name="Harbers M."/>
            <person name="Hayashi Y."/>
            <person name="Hensch T.K."/>
            <person name="Hirokawa N."/>
            <person name="Hill D."/>
            <person name="Huminiecki L."/>
            <person name="Iacono M."/>
            <person name="Ikeo K."/>
            <person name="Iwama A."/>
            <person name="Ishikawa T."/>
            <person name="Jakt M."/>
            <person name="Kanapin A."/>
            <person name="Katoh M."/>
            <person name="Kawasawa Y."/>
            <person name="Kelso J."/>
            <person name="Kitamura H."/>
            <person name="Kitano H."/>
            <person name="Kollias G."/>
            <person name="Krishnan S.P."/>
            <person name="Kruger A."/>
            <person name="Kummerfeld S.K."/>
            <person name="Kurochkin I.V."/>
            <person name="Lareau L.F."/>
            <person name="Lazarevic D."/>
            <person name="Lipovich L."/>
            <person name="Liu J."/>
            <person name="Liuni S."/>
            <person name="McWilliam S."/>
            <person name="Madan Babu M."/>
            <person name="Madera M."/>
            <person name="Marchionni L."/>
            <person name="Matsuda H."/>
            <person name="Matsuzawa S."/>
            <person name="Miki H."/>
            <person name="Mignone F."/>
            <person name="Miyake S."/>
            <person name="Morris K."/>
            <person name="Mottagui-Tabar S."/>
            <person name="Mulder N."/>
            <person name="Nakano N."/>
            <person name="Nakauchi H."/>
            <person name="Ng P."/>
            <person name="Nilsson R."/>
            <person name="Nishiguchi S."/>
            <person name="Nishikawa S."/>
            <person name="Nori F."/>
            <person name="Ohara O."/>
            <person name="Okazaki Y."/>
            <person name="Orlando V."/>
            <person name="Pang K.C."/>
            <person name="Pavan W.J."/>
            <person name="Pavesi G."/>
            <person name="Pesole G."/>
            <person name="Petrovsky N."/>
            <person name="Piazza S."/>
            <person name="Reed J."/>
            <person name="Reid J.F."/>
            <person name="Ring B.Z."/>
            <person name="Ringwald M."/>
            <person name="Rost B."/>
            <person name="Ruan Y."/>
            <person name="Salzberg S.L."/>
            <person name="Sandelin A."/>
            <person name="Schneider C."/>
            <person name="Schoenbach C."/>
            <person name="Sekiguchi K."/>
            <person name="Semple C.A."/>
            <person name="Seno S."/>
            <person name="Sessa L."/>
            <person name="Sheng Y."/>
            <person name="Shibata Y."/>
            <person name="Shimada H."/>
            <person name="Shimada K."/>
            <person name="Silva D."/>
            <person name="Sinclair B."/>
            <person name="Sperling S."/>
            <person name="Stupka E."/>
            <person name="Sugiura K."/>
            <person name="Sultana R."/>
            <person name="Takenaka Y."/>
            <person name="Taki K."/>
            <person name="Tammoja K."/>
            <person name="Tan S.L."/>
            <person name="Tang S."/>
            <person name="Taylor M.S."/>
            <person name="Tegner J."/>
            <person name="Teichmann S.A."/>
            <person name="Ueda H.R."/>
            <person name="van Nimwegen E."/>
            <person name="Verardo R."/>
            <person name="Wei C.L."/>
            <person name="Yagi K."/>
            <person name="Yamanishi H."/>
            <person name="Zabarovsky E."/>
            <person name="Zhu S."/>
            <person name="Zimmer A."/>
            <person name="Hide W."/>
            <person name="Bult C."/>
            <person name="Grimmond S.M."/>
            <person name="Teasdale R.D."/>
            <person name="Liu E.T."/>
            <person name="Brusic V."/>
            <person name="Quackenbush J."/>
            <person name="Wahlestedt C."/>
            <person name="Mattick J.S."/>
            <person name="Hume D.A."/>
            <person name="Kai C."/>
            <person name="Sasaki D."/>
            <person name="Tomaru Y."/>
            <person name="Fukuda S."/>
            <person name="Kanamori-Katayama M."/>
            <person name="Suzuki M."/>
            <person name="Aoki J."/>
            <person name="Arakawa T."/>
            <person name="Iida J."/>
            <person name="Imamura K."/>
            <person name="Itoh M."/>
            <person name="Kato T."/>
            <person name="Kawaji H."/>
            <person name="Kawagashira N."/>
            <person name="Kawashima T."/>
            <person name="Kojima M."/>
            <person name="Kondo S."/>
            <person name="Konno H."/>
            <person name="Nakano K."/>
            <person name="Ninomiya N."/>
            <person name="Nishio T."/>
            <person name="Okada M."/>
            <person name="Plessy C."/>
            <person name="Shibata K."/>
            <person name="Shiraki T."/>
            <person name="Suzuki S."/>
            <person name="Tagami M."/>
            <person name="Waki K."/>
            <person name="Watahiki A."/>
            <person name="Okamura-Oho Y."/>
            <person name="Suzuki H."/>
            <person name="Kawai J."/>
            <person name="Hayashizaki Y."/>
        </authorList>
    </citation>
    <scope>NUCLEOTIDE SEQUENCE [LARGE SCALE MRNA] (ISOFORM 1)</scope>
    <source>
        <strain>C57BL/6J</strain>
        <tissue>Egg</tissue>
    </source>
</reference>
<reference key="3">
    <citation type="journal article" date="2004" name="Genome Res.">
        <title>The status, quality, and expansion of the NIH full-length cDNA project: the Mammalian Gene Collection (MGC).</title>
        <authorList>
            <consortium name="The MGC Project Team"/>
        </authorList>
    </citation>
    <scope>NUCLEOTIDE SEQUENCE [LARGE SCALE MRNA]</scope>
</reference>
<reference key="4">
    <citation type="journal article" date="2005" name="BMC Evol. Biol.">
        <title>Phylogenetic analysis of eIF4E-family members.</title>
        <authorList>
            <person name="Joshi B."/>
            <person name="Lee K."/>
            <person name="Maeder D.L."/>
            <person name="Jagus R."/>
        </authorList>
    </citation>
    <scope>GENE FAMILY</scope>
</reference>
<keyword id="KW-0025">Alternative splicing</keyword>
<keyword id="KW-0396">Initiation factor</keyword>
<keyword id="KW-0648">Protein biosynthesis</keyword>
<keyword id="KW-1185">Reference proteome</keyword>
<keyword id="KW-0694">RNA-binding</keyword>
<organism>
    <name type="scientific">Mus musculus</name>
    <name type="common">Mouse</name>
    <dbReference type="NCBI Taxonomy" id="10090"/>
    <lineage>
        <taxon>Eukaryota</taxon>
        <taxon>Metazoa</taxon>
        <taxon>Chordata</taxon>
        <taxon>Craniata</taxon>
        <taxon>Vertebrata</taxon>
        <taxon>Euteleostomi</taxon>
        <taxon>Mammalia</taxon>
        <taxon>Eutheria</taxon>
        <taxon>Euarchontoglires</taxon>
        <taxon>Glires</taxon>
        <taxon>Rodentia</taxon>
        <taxon>Myomorpha</taxon>
        <taxon>Muroidea</taxon>
        <taxon>Muridae</taxon>
        <taxon>Murinae</taxon>
        <taxon>Mus</taxon>
        <taxon>Mus</taxon>
    </lineage>
</organism>